<name>AGDP1_ARATH</name>
<dbReference type="EMBL" id="AC006416">
    <property type="protein sequence ID" value="AAD18097.1"/>
    <property type="status" value="ALT_SEQ"/>
    <property type="molecule type" value="Genomic_DNA"/>
</dbReference>
<dbReference type="EMBL" id="CP002684">
    <property type="protein sequence ID" value="AEE28429.1"/>
    <property type="molecule type" value="Genomic_DNA"/>
</dbReference>
<dbReference type="EMBL" id="AK176493">
    <property type="protein sequence ID" value="BAD44256.1"/>
    <property type="molecule type" value="mRNA"/>
</dbReference>
<dbReference type="EMBL" id="BT022112">
    <property type="protein sequence ID" value="AAY34173.1"/>
    <property type="molecule type" value="mRNA"/>
</dbReference>
<dbReference type="PIR" id="C86226">
    <property type="entry name" value="C86226"/>
</dbReference>
<dbReference type="RefSeq" id="NP_172403.3">
    <property type="nucleotide sequence ID" value="NM_100802.5"/>
</dbReference>
<dbReference type="PDB" id="5ZWZ">
    <property type="method" value="X-ray"/>
    <property type="resolution" value="2.00 A"/>
    <property type="chains" value="A=198-364"/>
</dbReference>
<dbReference type="PDB" id="6IE4">
    <property type="method" value="X-ray"/>
    <property type="resolution" value="2.70 A"/>
    <property type="chains" value="A/C=31-177"/>
</dbReference>
<dbReference type="PDB" id="6IE5">
    <property type="method" value="X-ray"/>
    <property type="resolution" value="2.30 A"/>
    <property type="chains" value="A=201-355"/>
</dbReference>
<dbReference type="PDB" id="6IE6">
    <property type="method" value="X-ray"/>
    <property type="resolution" value="1.70 A"/>
    <property type="chains" value="A=201-355"/>
</dbReference>
<dbReference type="PDB" id="6IE7">
    <property type="method" value="X-ray"/>
    <property type="resolution" value="2.70 A"/>
    <property type="chains" value="A/B/C/D=31-177"/>
</dbReference>
<dbReference type="PDBsum" id="5ZWZ"/>
<dbReference type="PDBsum" id="6IE4"/>
<dbReference type="PDBsum" id="6IE5"/>
<dbReference type="PDBsum" id="6IE6"/>
<dbReference type="PDBsum" id="6IE7"/>
<dbReference type="SMR" id="Q500V5"/>
<dbReference type="FunCoup" id="Q500V5">
    <property type="interactions" value="541"/>
</dbReference>
<dbReference type="STRING" id="3702.Q500V5"/>
<dbReference type="iPTMnet" id="Q500V5"/>
<dbReference type="PaxDb" id="3702-AT1G09320.1"/>
<dbReference type="ProteomicsDB" id="185476"/>
<dbReference type="EnsemblPlants" id="AT1G09320.1">
    <property type="protein sequence ID" value="AT1G09320.1"/>
    <property type="gene ID" value="AT1G09320"/>
</dbReference>
<dbReference type="GeneID" id="837453"/>
<dbReference type="Gramene" id="AT1G09320.1">
    <property type="protein sequence ID" value="AT1G09320.1"/>
    <property type="gene ID" value="AT1G09320"/>
</dbReference>
<dbReference type="KEGG" id="ath:AT1G09320"/>
<dbReference type="Araport" id="AT1G09320"/>
<dbReference type="TAIR" id="AT1G09320">
    <property type="gene designation" value="AGDP1"/>
</dbReference>
<dbReference type="eggNOG" id="ENOG502QW7Z">
    <property type="taxonomic scope" value="Eukaryota"/>
</dbReference>
<dbReference type="HOGENOM" id="CLU_028776_0_0_1"/>
<dbReference type="InParanoid" id="Q500V5"/>
<dbReference type="OMA" id="HVDEDKY"/>
<dbReference type="PhylomeDB" id="Q500V5"/>
<dbReference type="CD-CODE" id="8F2F7B5C">
    <property type="entry name" value="Heterochromatin"/>
</dbReference>
<dbReference type="PRO" id="PR:Q500V5"/>
<dbReference type="Proteomes" id="UP000006548">
    <property type="component" value="Chromosome 1"/>
</dbReference>
<dbReference type="ExpressionAtlas" id="Q500V5">
    <property type="expression patterns" value="baseline and differential"/>
</dbReference>
<dbReference type="GO" id="GO:0000775">
    <property type="term" value="C:chromosome, centromeric region"/>
    <property type="evidence" value="ECO:0000314"/>
    <property type="project" value="UniProtKB"/>
</dbReference>
<dbReference type="GO" id="GO:0000792">
    <property type="term" value="C:heterochromatin"/>
    <property type="evidence" value="ECO:0000314"/>
    <property type="project" value="UniProtKB"/>
</dbReference>
<dbReference type="GO" id="GO:0005634">
    <property type="term" value="C:nucleus"/>
    <property type="evidence" value="ECO:0007669"/>
    <property type="project" value="UniProtKB-SubCell"/>
</dbReference>
<dbReference type="GO" id="GO:0042393">
    <property type="term" value="F:histone binding"/>
    <property type="evidence" value="ECO:0000314"/>
    <property type="project" value="UniProtKB"/>
</dbReference>
<dbReference type="GO" id="GO:0140566">
    <property type="term" value="F:histone reader activity"/>
    <property type="evidence" value="ECO:0000314"/>
    <property type="project" value="UniProtKB"/>
</dbReference>
<dbReference type="GO" id="GO:0035064">
    <property type="term" value="F:methylated histone binding"/>
    <property type="evidence" value="ECO:0000314"/>
    <property type="project" value="TAIR"/>
</dbReference>
<dbReference type="GO" id="GO:0006346">
    <property type="term" value="P:DNA methylation-dependent constitutive heterochromatin formation"/>
    <property type="evidence" value="ECO:0000315"/>
    <property type="project" value="UniProtKB"/>
</dbReference>
<dbReference type="CDD" id="cd20405">
    <property type="entry name" value="Tudor_Agenet_AtDUF_rpt1_3"/>
    <property type="match status" value="3"/>
</dbReference>
<dbReference type="CDD" id="cd20406">
    <property type="entry name" value="Tudor_Agenet_AtDUF_rpt2_4"/>
    <property type="match status" value="3"/>
</dbReference>
<dbReference type="InterPro" id="IPR008395">
    <property type="entry name" value="Agenet-like_dom"/>
</dbReference>
<dbReference type="InterPro" id="IPR014002">
    <property type="entry name" value="Agenet_dom_plant"/>
</dbReference>
<dbReference type="PANTHER" id="PTHR31917">
    <property type="entry name" value="AGENET DOMAIN-CONTAINING PROTEIN-RELATED"/>
    <property type="match status" value="1"/>
</dbReference>
<dbReference type="PANTHER" id="PTHR31917:SF80">
    <property type="entry name" value="AGENET DOMAIN-CONTAINING PROTEIN-RELATED"/>
    <property type="match status" value="1"/>
</dbReference>
<dbReference type="Pfam" id="PF05641">
    <property type="entry name" value="Agenet"/>
    <property type="match status" value="4"/>
</dbReference>
<dbReference type="SMART" id="SM00743">
    <property type="entry name" value="Agenet"/>
    <property type="match status" value="6"/>
</dbReference>
<reference key="1">
    <citation type="journal article" date="2000" name="Nature">
        <title>Sequence and analysis of chromosome 1 of the plant Arabidopsis thaliana.</title>
        <authorList>
            <person name="Theologis A."/>
            <person name="Ecker J.R."/>
            <person name="Palm C.J."/>
            <person name="Federspiel N.A."/>
            <person name="Kaul S."/>
            <person name="White O."/>
            <person name="Alonso J."/>
            <person name="Altafi H."/>
            <person name="Araujo R."/>
            <person name="Bowman C.L."/>
            <person name="Brooks S.Y."/>
            <person name="Buehler E."/>
            <person name="Chan A."/>
            <person name="Chao Q."/>
            <person name="Chen H."/>
            <person name="Cheuk R.F."/>
            <person name="Chin C.W."/>
            <person name="Chung M.K."/>
            <person name="Conn L."/>
            <person name="Conway A.B."/>
            <person name="Conway A.R."/>
            <person name="Creasy T.H."/>
            <person name="Dewar K."/>
            <person name="Dunn P."/>
            <person name="Etgu P."/>
            <person name="Feldblyum T.V."/>
            <person name="Feng J.-D."/>
            <person name="Fong B."/>
            <person name="Fujii C.Y."/>
            <person name="Gill J.E."/>
            <person name="Goldsmith A.D."/>
            <person name="Haas B."/>
            <person name="Hansen N.F."/>
            <person name="Hughes B."/>
            <person name="Huizar L."/>
            <person name="Hunter J.L."/>
            <person name="Jenkins J."/>
            <person name="Johnson-Hopson C."/>
            <person name="Khan S."/>
            <person name="Khaykin E."/>
            <person name="Kim C.J."/>
            <person name="Koo H.L."/>
            <person name="Kremenetskaia I."/>
            <person name="Kurtz D.B."/>
            <person name="Kwan A."/>
            <person name="Lam B."/>
            <person name="Langin-Hooper S."/>
            <person name="Lee A."/>
            <person name="Lee J.M."/>
            <person name="Lenz C.A."/>
            <person name="Li J.H."/>
            <person name="Li Y.-P."/>
            <person name="Lin X."/>
            <person name="Liu S.X."/>
            <person name="Liu Z.A."/>
            <person name="Luros J.S."/>
            <person name="Maiti R."/>
            <person name="Marziali A."/>
            <person name="Militscher J."/>
            <person name="Miranda M."/>
            <person name="Nguyen M."/>
            <person name="Nierman W.C."/>
            <person name="Osborne B.I."/>
            <person name="Pai G."/>
            <person name="Peterson J."/>
            <person name="Pham P.K."/>
            <person name="Rizzo M."/>
            <person name="Rooney T."/>
            <person name="Rowley D."/>
            <person name="Sakano H."/>
            <person name="Salzberg S.L."/>
            <person name="Schwartz J.R."/>
            <person name="Shinn P."/>
            <person name="Southwick A.M."/>
            <person name="Sun H."/>
            <person name="Tallon L.J."/>
            <person name="Tambunga G."/>
            <person name="Toriumi M.J."/>
            <person name="Town C.D."/>
            <person name="Utterback T."/>
            <person name="Van Aken S."/>
            <person name="Vaysberg M."/>
            <person name="Vysotskaia V.S."/>
            <person name="Walker M."/>
            <person name="Wu D."/>
            <person name="Yu G."/>
            <person name="Fraser C.M."/>
            <person name="Venter J.C."/>
            <person name="Davis R.W."/>
        </authorList>
    </citation>
    <scope>NUCLEOTIDE SEQUENCE [LARGE SCALE GENOMIC DNA]</scope>
    <source>
        <strain>cv. Columbia</strain>
    </source>
</reference>
<reference key="2">
    <citation type="journal article" date="2017" name="Plant J.">
        <title>Araport11: a complete reannotation of the Arabidopsis thaliana reference genome.</title>
        <authorList>
            <person name="Cheng C.Y."/>
            <person name="Krishnakumar V."/>
            <person name="Chan A.P."/>
            <person name="Thibaud-Nissen F."/>
            <person name="Schobel S."/>
            <person name="Town C.D."/>
        </authorList>
    </citation>
    <scope>GENOME REANNOTATION</scope>
    <source>
        <strain>cv. Columbia</strain>
    </source>
</reference>
<reference key="3">
    <citation type="submission" date="2004-09" db="EMBL/GenBank/DDBJ databases">
        <title>Large-scale analysis of RIKEN Arabidopsis full-length (RAFL) cDNAs.</title>
        <authorList>
            <person name="Totoki Y."/>
            <person name="Seki M."/>
            <person name="Ishida J."/>
            <person name="Nakajima M."/>
            <person name="Enju A."/>
            <person name="Kamiya A."/>
            <person name="Narusaka M."/>
            <person name="Shin-i T."/>
            <person name="Nakagawa M."/>
            <person name="Sakamoto N."/>
            <person name="Oishi K."/>
            <person name="Kohara Y."/>
            <person name="Kobayashi M."/>
            <person name="Toyoda A."/>
            <person name="Sakaki Y."/>
            <person name="Sakurai T."/>
            <person name="Iida K."/>
            <person name="Akiyama K."/>
            <person name="Satou M."/>
            <person name="Toyoda T."/>
            <person name="Konagaya A."/>
            <person name="Carninci P."/>
            <person name="Kawai J."/>
            <person name="Hayashizaki Y."/>
            <person name="Shinozaki K."/>
        </authorList>
    </citation>
    <scope>NUCLEOTIDE SEQUENCE [LARGE SCALE MRNA]</scope>
    <source>
        <strain>cv. Columbia</strain>
    </source>
</reference>
<reference key="4">
    <citation type="submission" date="2005-05" db="EMBL/GenBank/DDBJ databases">
        <title>Arabidopsis cDNA clones.</title>
        <authorList>
            <person name="Shinn P."/>
            <person name="Chen H."/>
            <person name="Cheuk R.F."/>
            <person name="Kim C.J."/>
            <person name="Ecker J.R."/>
        </authorList>
    </citation>
    <scope>NUCLEOTIDE SEQUENCE [LARGE SCALE MRNA]</scope>
    <source>
        <strain>cv. Columbia</strain>
    </source>
</reference>
<reference key="5">
    <citation type="journal article" date="2003" name="Trends Biochem. Sci.">
        <title>The tudor domain 'Royal Family': Tudor, plant agenet, chromo, PWWP and MBT domains.</title>
        <authorList>
            <person name="Maurer-Stroh S."/>
            <person name="Dickens N.J."/>
            <person name="Hughes-Davies L."/>
            <person name="Kouzarides T."/>
            <person name="Eisenhaber F."/>
            <person name="Ponting C.P."/>
        </authorList>
    </citation>
    <scope>GENE FAMILY</scope>
</reference>
<reference key="6">
    <citation type="journal article" date="2018" name="Nat. Commun.">
        <title>Arabidopsis AGDP1 links H3K9me2 to DNA methylation in heterochromatin.</title>
        <authorList>
            <person name="Zhang C."/>
            <person name="Du X."/>
            <person name="Tang K."/>
            <person name="Yang Z."/>
            <person name="Pan L."/>
            <person name="Zhu P."/>
            <person name="Luo J."/>
            <person name="Jiang Y."/>
            <person name="Zhang H."/>
            <person name="Wan H."/>
            <person name="Wang X."/>
            <person name="Wu F."/>
            <person name="Tao W.A."/>
            <person name="He X.-J."/>
            <person name="Zhang H."/>
            <person name="Bressan R.A."/>
            <person name="Du J."/>
            <person name="Zhu J.-K."/>
        </authorList>
    </citation>
    <scope>X-RAY CRYSTALLOGRAPHY (2.00 ANGSTROMS) OF 198-364</scope>
    <scope>FUNCTION</scope>
    <scope>DISRUPTION PHENOTYPE</scope>
    <scope>DOMAIN</scope>
    <scope>SUBCELLULAR LOCATION</scope>
    <source>
        <strain>cv. Columbia</strain>
    </source>
</reference>
<reference key="7">
    <citation type="journal article" date="2019" name="Cell Res.">
        <title>Plant HP1 protein ADCP1 links multivalent H3K9 methylation readout to heterochromatin formation.</title>
        <authorList>
            <person name="Zhao S."/>
            <person name="Cheng L."/>
            <person name="Gao Y."/>
            <person name="Zhang B."/>
            <person name="Zheng X."/>
            <person name="Wang L."/>
            <person name="Li P."/>
            <person name="Sun Q."/>
            <person name="Li H."/>
        </authorList>
    </citation>
    <scope>X-RAY CRYSTALLOGRAPHY (1.70 ANGSTROMS) OF 201-355 IN COMPLEX WITH H3K9ME2 PEPTIDES</scope>
    <scope>FUNCTION</scope>
    <scope>MUTAGENESIS OF TYR-129; TRP-134; TYR-301; TRP-306; TYR-461 AND TRP-466</scope>
    <scope>DISRUPTION PHENOTYPE</scope>
    <scope>DOMAIN</scope>
    <scope>SUBCELLULAR LOCATION</scope>
    <scope>TISSUE SPECIFICITY</scope>
    <source>
        <strain>cv. Columbia</strain>
    </source>
</reference>
<keyword id="KW-0002">3D-structure</keyword>
<keyword id="KW-0156">Chromatin regulator</keyword>
<keyword id="KW-0539">Nucleus</keyword>
<keyword id="KW-1185">Reference proteome</keyword>
<accession>Q500V5</accession>
<accession>Q67YH5</accession>
<accession>Q9ZPZ3</accession>
<gene>
    <name evidence="4" type="primary">AGDP1</name>
    <name evidence="5" type="synonym">ADCP1</name>
    <name evidence="8" type="ordered locus">At1g09320</name>
    <name evidence="9" type="ORF">T31J12.4</name>
</gene>
<feature type="chain" id="PRO_0000447324" description="Protein AGENET DOMAIN (AGD)-CONTAINING P1">
    <location>
        <begin position="1"/>
        <end position="517"/>
    </location>
</feature>
<feature type="region of interest" description="Disordered" evidence="1">
    <location>
        <begin position="1"/>
        <end position="35"/>
    </location>
</feature>
<feature type="region of interest" description="Plant Agenet, chromatin-binding" evidence="7">
    <location>
        <begin position="37"/>
        <end position="111"/>
    </location>
</feature>
<feature type="region of interest" description="Plant Agenet, chromatin-binding" evidence="7">
    <location>
        <begin position="117"/>
        <end position="173"/>
    </location>
</feature>
<feature type="region of interest" description="Disordered" evidence="1">
    <location>
        <begin position="177"/>
        <end position="202"/>
    </location>
</feature>
<feature type="region of interest" description="Plant Agenet, chromatin-binding" evidence="7">
    <location>
        <begin position="219"/>
        <end position="287"/>
    </location>
</feature>
<feature type="region of interest" description="Plant Agenet, chromatin-binding" evidence="7">
    <location>
        <begin position="289"/>
        <end position="345"/>
    </location>
</feature>
<feature type="region of interest" description="Plant Agenet, chromatin-binding" evidence="7">
    <location>
        <begin position="378"/>
        <end position="446"/>
    </location>
</feature>
<feature type="region of interest" description="Plant Agenet, chromatin-binding" evidence="7">
    <location>
        <begin position="449"/>
        <end position="505"/>
    </location>
</feature>
<feature type="compositionally biased region" description="Acidic residues" evidence="1">
    <location>
        <begin position="181"/>
        <end position="202"/>
    </location>
</feature>
<feature type="mutagenesis site" description="Impaired H3K9me2 binding; when associated with A-134. Disrupted H3K9me2 binding; when associated with A-134; A-301; A-306; A-461 and A-466." evidence="3">
    <original>Y</original>
    <variation>A</variation>
    <location>
        <position position="129"/>
    </location>
</feature>
<feature type="mutagenesis site" description="Impaired H3K9me2 binding; when associated with A-129. Disrupted H3K9me2 binding; when associated with A-129; A-301; A-306; A-461 and A-466." evidence="3">
    <original>W</original>
    <variation>A</variation>
    <location>
        <position position="134"/>
    </location>
</feature>
<feature type="mutagenesis site" description="Impaired H3K9me2 binding; when associated with A-306. Disrupted H3K9me2 binding; when associated with A-129; A-134; A-306; A-461 and A-466." evidence="3">
    <original>Y</original>
    <variation>A</variation>
    <location>
        <position position="301"/>
    </location>
</feature>
<feature type="mutagenesis site" description="Impaired H3K9me2 binding; when associated with A-301. Disrupted H3K9me2 binding; when associated with A-129; A-134; A-301; A-461 and A-466." evidence="3">
    <original>W</original>
    <variation>A</variation>
    <location>
        <position position="306"/>
    </location>
</feature>
<feature type="mutagenesis site" description="Impaired H3K9me2 binding; when associated with A-466. Disrupted H3K9me2 binding; when associated with A-129; A-134; A-301; A-306 and A-466." evidence="3">
    <original>Y</original>
    <variation>A</variation>
    <location>
        <position position="461"/>
    </location>
</feature>
<feature type="mutagenesis site" description="Impaired H3K9me2 binding; when associated with A-461. Disrupted H3K9me2 binding; when associated with A-129; A-134; A-301; A-306 and A-461." evidence="3">
    <original>W</original>
    <variation>A</variation>
    <location>
        <position position="466"/>
    </location>
</feature>
<feature type="sequence conflict" description="In Ref. 3; BAD44256." evidence="6" ref="3">
    <original>P</original>
    <variation>S</variation>
    <location>
        <position position="105"/>
    </location>
</feature>
<feature type="helix" evidence="10">
    <location>
        <begin position="37"/>
        <end position="39"/>
    </location>
</feature>
<feature type="strand" evidence="10">
    <location>
        <begin position="44"/>
        <end position="47"/>
    </location>
</feature>
<feature type="strand" evidence="10">
    <location>
        <begin position="57"/>
        <end position="65"/>
    </location>
</feature>
<feature type="strand" evidence="10">
    <location>
        <begin position="76"/>
        <end position="87"/>
    </location>
</feature>
<feature type="strand" evidence="10">
    <location>
        <begin position="92"/>
        <end position="99"/>
    </location>
</feature>
<feature type="helix" evidence="10">
    <location>
        <begin position="100"/>
        <end position="102"/>
    </location>
</feature>
<feature type="helix" evidence="10">
    <location>
        <begin position="114"/>
        <end position="116"/>
    </location>
</feature>
<feature type="strand" evidence="10">
    <location>
        <begin position="123"/>
        <end position="129"/>
    </location>
</feature>
<feature type="strand" evidence="10">
    <location>
        <begin position="132"/>
        <end position="142"/>
    </location>
</feature>
<feature type="turn" evidence="10">
    <location>
        <begin position="143"/>
        <end position="145"/>
    </location>
</feature>
<feature type="strand" evidence="10">
    <location>
        <begin position="146"/>
        <end position="151"/>
    </location>
</feature>
<feature type="turn" evidence="10">
    <location>
        <begin position="152"/>
        <end position="155"/>
    </location>
</feature>
<feature type="strand" evidence="10">
    <location>
        <begin position="156"/>
        <end position="161"/>
    </location>
</feature>
<feature type="helix" evidence="10">
    <location>
        <begin position="162"/>
        <end position="164"/>
    </location>
</feature>
<feature type="strand" evidence="10">
    <location>
        <begin position="165"/>
        <end position="167"/>
    </location>
</feature>
<feature type="strand" evidence="10">
    <location>
        <begin position="170"/>
        <end position="172"/>
    </location>
</feature>
<feature type="strand" evidence="10">
    <location>
        <begin position="175"/>
        <end position="177"/>
    </location>
</feature>
<feature type="turn" evidence="11">
    <location>
        <begin position="205"/>
        <end position="207"/>
    </location>
</feature>
<feature type="helix" evidence="11">
    <location>
        <begin position="210"/>
        <end position="220"/>
    </location>
</feature>
<feature type="strand" evidence="11">
    <location>
        <begin position="226"/>
        <end position="229"/>
    </location>
</feature>
<feature type="strand" evidence="11">
    <location>
        <begin position="239"/>
        <end position="249"/>
    </location>
</feature>
<feature type="turn" evidence="11">
    <location>
        <begin position="250"/>
        <end position="252"/>
    </location>
</feature>
<feature type="strand" evidence="11">
    <location>
        <begin position="253"/>
        <end position="262"/>
    </location>
</feature>
<feature type="strand" evidence="11">
    <location>
        <begin position="266"/>
        <end position="275"/>
    </location>
</feature>
<feature type="strand" evidence="11">
    <location>
        <begin position="278"/>
        <end position="280"/>
    </location>
</feature>
<feature type="strand" evidence="11">
    <location>
        <begin position="296"/>
        <end position="301"/>
    </location>
</feature>
<feature type="strand" evidence="11">
    <location>
        <begin position="304"/>
        <end position="315"/>
    </location>
</feature>
<feature type="strand" evidence="11">
    <location>
        <begin position="318"/>
        <end position="323"/>
    </location>
</feature>
<feature type="turn" evidence="11">
    <location>
        <begin position="324"/>
        <end position="327"/>
    </location>
</feature>
<feature type="strand" evidence="11">
    <location>
        <begin position="328"/>
        <end position="333"/>
    </location>
</feature>
<feature type="helix" evidence="11">
    <location>
        <begin position="334"/>
        <end position="336"/>
    </location>
</feature>
<feature type="strand" evidence="11">
    <location>
        <begin position="337"/>
        <end position="339"/>
    </location>
</feature>
<feature type="strand" evidence="11">
    <location>
        <begin position="342"/>
        <end position="344"/>
    </location>
</feature>
<feature type="strand" evidence="11">
    <location>
        <begin position="347"/>
        <end position="349"/>
    </location>
</feature>
<proteinExistence type="evidence at protein level"/>
<protein>
    <recommendedName>
        <fullName evidence="4">Protein AGENET DOMAIN (AGD)-CONTAINING P1</fullName>
    </recommendedName>
    <alternativeName>
        <fullName evidence="5">Protein ONE AGENET DOMAIN-CONTAINING PROTEIN</fullName>
    </alternativeName>
</protein>
<evidence type="ECO:0000256" key="1">
    <source>
        <dbReference type="SAM" id="MobiDB-lite"/>
    </source>
</evidence>
<evidence type="ECO:0000269" key="2">
    <source>
    </source>
</evidence>
<evidence type="ECO:0000269" key="3">
    <source>
    </source>
</evidence>
<evidence type="ECO:0000303" key="4">
    <source>
    </source>
</evidence>
<evidence type="ECO:0000303" key="5">
    <source>
    </source>
</evidence>
<evidence type="ECO:0000305" key="6"/>
<evidence type="ECO:0000305" key="7">
    <source>
    </source>
</evidence>
<evidence type="ECO:0000312" key="8">
    <source>
        <dbReference type="Araport" id="AT1G09320"/>
    </source>
</evidence>
<evidence type="ECO:0000312" key="9">
    <source>
        <dbReference type="EMBL" id="AAD18097.1"/>
    </source>
</evidence>
<evidence type="ECO:0007829" key="10">
    <source>
        <dbReference type="PDB" id="6IE4"/>
    </source>
</evidence>
<evidence type="ECO:0007829" key="11">
    <source>
        <dbReference type="PDB" id="6IE6"/>
    </source>
</evidence>
<comment type="function">
    <text evidence="2 3">Heterochromatin-binding protein that preferentially occupies long transposons and specifically recognizes the histone H3 'Lys-9' methylation (H3K9me) marks, with a stronger affinity for dimethylated H3K9 (H3K9me2) (PubMed:30382101, PubMed:30425322). Required for transcriptional silencing, non-CG DNA methylation (e.g. CHG and CHH regions), and H3K9 dimethylation (H3K9me2) at some loci (PubMed:30382101, PubMed:30425322). Mediates heterochromatin phase separation and chromocenter formation (PubMed:30425322).</text>
</comment>
<comment type="subcellular location">
    <subcellularLocation>
        <location evidence="2 3">Nucleus</location>
    </subcellularLocation>
    <text evidence="2 3">Enriched in heterochromatin, concentrated in centromeric and pericentromeric regions.</text>
</comment>
<comment type="tissue specificity">
    <text evidence="3">Expressed ubiquitously during vegetative stage, in meristems (e.g. root tips and shoot apical meristem), and in ovules and young seeds during reproductive stage.</text>
</comment>
<comment type="domain">
    <text evidence="2 3">The tandem Agenet domains (AGDs) mediate the specific recognition of the histone 3 lysine 9 dimethylation (H3K9me2) mark.</text>
</comment>
<comment type="disruption phenotype">
    <text evidence="2 3">Abnormal transcription up-regulation of some transposable elements (TEs) and of hypermethylated loci (including MU1, GP1, SN1 and ERT7) (PubMed:30382101, PubMed:30425322). Hypomethylated DNA CHG and CHH regions (PubMed:30382101, PubMed:30425322). Reduced H3K9me2 levels (PubMed:30382101). Increased ratio of decondensed nuclei (PubMed:30425322).</text>
</comment>
<comment type="sequence caution" evidence="6">
    <conflict type="erroneous gene model prediction">
        <sequence resource="EMBL-CDS" id="AAD18097"/>
    </conflict>
</comment>
<organism>
    <name type="scientific">Arabidopsis thaliana</name>
    <name type="common">Mouse-ear cress</name>
    <dbReference type="NCBI Taxonomy" id="3702"/>
    <lineage>
        <taxon>Eukaryota</taxon>
        <taxon>Viridiplantae</taxon>
        <taxon>Streptophyta</taxon>
        <taxon>Embryophyta</taxon>
        <taxon>Tracheophyta</taxon>
        <taxon>Spermatophyta</taxon>
        <taxon>Magnoliopsida</taxon>
        <taxon>eudicotyledons</taxon>
        <taxon>Gunneridae</taxon>
        <taxon>Pentapetalae</taxon>
        <taxon>rosids</taxon>
        <taxon>malvids</taxon>
        <taxon>Brassicales</taxon>
        <taxon>Brassicaceae</taxon>
        <taxon>Camelineae</taxon>
        <taxon>Arabidopsis</taxon>
    </lineage>
</organism>
<sequence>MLRPRRSLGVSSPAKQRKKAAPKNSMATRANRKRLPSYLKPGSAVEISSDEIGFRGSWYMGKVITIPSSSDKDSVKCQVEYTTLFFDKEGTKPLKEVVDMSQLRPPAPPMSEIEKKKKIVVGEEVDAFYNDGWWEGDVTEVLDDGKFSVFFRSSKEQIRFRKDELRFHREWVDGAWKPPLEETEEEEDESEEDKLDDSEDEEDILARVDLETTRAIAKQMFSSGTVVEVSSDEEGFQGCWFAAKVVEPVGEDKFLVEYRDLREKDGIEPLKEETDFLHIRPPPPRDEDIDFAVGDKINAFYNDGWWVGVVIDGMKHGTVGIYFRQSQEKMRFGRQGLRLHKDWVDGTWQLPLKGGKIKREKTVSCNRNVRPKKATEKQAFSIGTPIEVSPEEEGFEDSWFLAKLIEYRGKDKCLVEYDNLKAEDGKEPLREEVNVSRIRPLPLESVMVSPFERHDKVNALYNDGWWVGVIRKVLAKSSYLVLFKNTQELLKFHHSQLRLHQEWIDGKWITSFKSQKV</sequence>